<gene>
    <name type="primary">CRYAA</name>
</gene>
<reference key="1">
    <citation type="journal article" date="1984" name="Eur. J. Biochem.">
        <title>Primary structures of the alpha-crystallin A chains of twenty-eight mammalian species, chicken and frog.</title>
        <authorList>
            <person name="de Jong W.W."/>
            <person name="Zweers A."/>
            <person name="Versteeg M."/>
            <person name="Nuy-Terwindt E.C."/>
        </authorList>
    </citation>
    <scope>PROTEIN SEQUENCE</scope>
    <source>
        <tissue>Lens</tissue>
    </source>
</reference>
<comment type="function">
    <text evidence="4">Contributes to the transparency and refractive index of the lens. Acts as a chaperone, preventing aggregation of various proteins under a wide range of stress conditions. Required for the correct formation of lens intermediate filaments as part of a complex composed of BFSP1, BFSP2 and CRYAA.</text>
</comment>
<comment type="subunit">
    <text evidence="2 4">Heteromer composed of three CRYAA and one CRYAB subunits (By similarity). Zinc coordination is achieved at least by His-100, Glu-102 and His-107. His-100 and Glu-102 come from the same molecule within the oligomer, while His-107 residue is provided by another molecule (By similarity). Inter-subunit bridging via zinc ions enhances stability, which is crucial as there is no protein turn over in the lens. Can also form homodimers and homotetramers (dimers of dimers) which serve as the building blocks of homooligomers. Part of a complex required for lens intermediate filament formation composed of BFSP1, BFSP2 and CRYAA (By similarity).</text>
</comment>
<comment type="subcellular location">
    <subcellularLocation>
        <location evidence="4">Cytoplasm</location>
    </subcellularLocation>
    <subcellularLocation>
        <location evidence="4">Nucleus</location>
    </subcellularLocation>
    <text evidence="4">Translocates to the nucleus during heat shock and resides in sub-nuclear structures known as SC35 speckles or nuclear splicing speckles.</text>
</comment>
<comment type="PTM">
    <text evidence="4">Acetylation at Lys-70 may increase chaperone activity.</text>
</comment>
<comment type="PTM">
    <text evidence="4">Undergoes age-dependent proteolytical cleavage at the C-terminus.</text>
</comment>
<comment type="similarity">
    <text evidence="5">Belongs to the small heat shock protein (HSP20) family.</text>
</comment>
<accession>P82533</accession>
<keyword id="KW-0007">Acetylation</keyword>
<keyword id="KW-0143">Chaperone</keyword>
<keyword id="KW-0963">Cytoplasm</keyword>
<keyword id="KW-0903">Direct protein sequencing</keyword>
<keyword id="KW-0273">Eye lens protein</keyword>
<keyword id="KW-0325">Glycoprotein</keyword>
<keyword id="KW-0479">Metal-binding</keyword>
<keyword id="KW-0488">Methylation</keyword>
<keyword id="KW-0539">Nucleus</keyword>
<keyword id="KW-0597">Phosphoprotein</keyword>
<keyword id="KW-1185">Reference proteome</keyword>
<keyword id="KW-0862">Zinc</keyword>
<sequence length="173" mass="19601">MDVTIQHPWFKRALGPFYPSRLLDQFFGEGLFEYDLLPFLSSTISPYYRQSLFRTVLDSGISEVRSDRDKFVIFLDVKHFSPEDLTVKVLEDFVEIHGKHSERQDDHGYISREFHRRYRLPPSVDQAALSCSLSADGMLTFSGPKVASGLDAGPSERAIPVSREEKPSSAPSS</sequence>
<proteinExistence type="evidence at protein level"/>
<evidence type="ECO:0000250" key="1"/>
<evidence type="ECO:0000250" key="2">
    <source>
        <dbReference type="UniProtKB" id="P02470"/>
    </source>
</evidence>
<evidence type="ECO:0000250" key="3">
    <source>
        <dbReference type="UniProtKB" id="P02474"/>
    </source>
</evidence>
<evidence type="ECO:0000250" key="4">
    <source>
        <dbReference type="UniProtKB" id="P02489"/>
    </source>
</evidence>
<evidence type="ECO:0000255" key="5">
    <source>
        <dbReference type="PROSITE-ProRule" id="PRU00285"/>
    </source>
</evidence>
<evidence type="ECO:0000256" key="6">
    <source>
        <dbReference type="SAM" id="MobiDB-lite"/>
    </source>
</evidence>
<evidence type="ECO:0000305" key="7"/>
<protein>
    <recommendedName>
        <fullName>Alpha-crystallin A chain</fullName>
    </recommendedName>
</protein>
<dbReference type="SMR" id="P82533"/>
<dbReference type="FunCoup" id="P82533">
    <property type="interactions" value="190"/>
</dbReference>
<dbReference type="GlyCosmos" id="P82533">
    <property type="glycosylation" value="1 site, No reported glycans"/>
</dbReference>
<dbReference type="eggNOG" id="KOG3591">
    <property type="taxonomic scope" value="Eukaryota"/>
</dbReference>
<dbReference type="InParanoid" id="P82533"/>
<dbReference type="Proteomes" id="UP000079721">
    <property type="component" value="Unplaced"/>
</dbReference>
<dbReference type="GO" id="GO:0005737">
    <property type="term" value="C:cytoplasm"/>
    <property type="evidence" value="ECO:0000250"/>
    <property type="project" value="UniProtKB"/>
</dbReference>
<dbReference type="GO" id="GO:0005634">
    <property type="term" value="C:nucleus"/>
    <property type="evidence" value="ECO:0000250"/>
    <property type="project" value="UniProtKB"/>
</dbReference>
<dbReference type="GO" id="GO:0046872">
    <property type="term" value="F:metal ion binding"/>
    <property type="evidence" value="ECO:0007669"/>
    <property type="project" value="UniProtKB-KW"/>
</dbReference>
<dbReference type="GO" id="GO:0005212">
    <property type="term" value="F:structural constituent of eye lens"/>
    <property type="evidence" value="ECO:0007669"/>
    <property type="project" value="UniProtKB-KW"/>
</dbReference>
<dbReference type="GO" id="GO:0051082">
    <property type="term" value="F:unfolded protein binding"/>
    <property type="evidence" value="ECO:0007669"/>
    <property type="project" value="TreeGrafter"/>
</dbReference>
<dbReference type="GO" id="GO:0002088">
    <property type="term" value="P:lens development in camera-type eye"/>
    <property type="evidence" value="ECO:0007669"/>
    <property type="project" value="TreeGrafter"/>
</dbReference>
<dbReference type="GO" id="GO:0043066">
    <property type="term" value="P:negative regulation of apoptotic process"/>
    <property type="evidence" value="ECO:0007669"/>
    <property type="project" value="TreeGrafter"/>
</dbReference>
<dbReference type="GO" id="GO:0042026">
    <property type="term" value="P:protein refolding"/>
    <property type="evidence" value="ECO:0007669"/>
    <property type="project" value="TreeGrafter"/>
</dbReference>
<dbReference type="GO" id="GO:0009408">
    <property type="term" value="P:response to heat"/>
    <property type="evidence" value="ECO:0007669"/>
    <property type="project" value="TreeGrafter"/>
</dbReference>
<dbReference type="FunFam" id="2.60.40.790:FF:000008">
    <property type="entry name" value="Alpha-crystallin A chain"/>
    <property type="match status" value="1"/>
</dbReference>
<dbReference type="Gene3D" id="2.60.40.790">
    <property type="match status" value="1"/>
</dbReference>
<dbReference type="InterPro" id="IPR002068">
    <property type="entry name" value="A-crystallin/Hsp20_dom"/>
</dbReference>
<dbReference type="InterPro" id="IPR055269">
    <property type="entry name" value="Alpha-crystallin/HSP_16"/>
</dbReference>
<dbReference type="InterPro" id="IPR001436">
    <property type="entry name" value="Alpha-crystallin/sHSP_animal"/>
</dbReference>
<dbReference type="InterPro" id="IPR003090">
    <property type="entry name" value="Alpha-crystallin_N"/>
</dbReference>
<dbReference type="InterPro" id="IPR008978">
    <property type="entry name" value="HSP20-like_chaperone"/>
</dbReference>
<dbReference type="PANTHER" id="PTHR45640:SF14">
    <property type="entry name" value="ALPHA-CRYSTALLIN A CHAIN"/>
    <property type="match status" value="1"/>
</dbReference>
<dbReference type="PANTHER" id="PTHR45640">
    <property type="entry name" value="HEAT SHOCK PROTEIN HSP-12.2-RELATED"/>
    <property type="match status" value="1"/>
</dbReference>
<dbReference type="Pfam" id="PF00525">
    <property type="entry name" value="Crystallin"/>
    <property type="match status" value="1"/>
</dbReference>
<dbReference type="Pfam" id="PF00011">
    <property type="entry name" value="HSP20"/>
    <property type="match status" value="1"/>
</dbReference>
<dbReference type="PIRSF" id="PIRSF036514">
    <property type="entry name" value="Sm_HSP_B1"/>
    <property type="match status" value="1"/>
</dbReference>
<dbReference type="PRINTS" id="PR00299">
    <property type="entry name" value="ACRYSTALLIN"/>
</dbReference>
<dbReference type="SUPFAM" id="SSF49764">
    <property type="entry name" value="HSP20-like chaperones"/>
    <property type="match status" value="1"/>
</dbReference>
<dbReference type="PROSITE" id="PS01031">
    <property type="entry name" value="SHSP"/>
    <property type="match status" value="1"/>
</dbReference>
<organism>
    <name type="scientific">Erinaceus europaeus</name>
    <name type="common">Western European hedgehog</name>
    <dbReference type="NCBI Taxonomy" id="9365"/>
    <lineage>
        <taxon>Eukaryota</taxon>
        <taxon>Metazoa</taxon>
        <taxon>Chordata</taxon>
        <taxon>Craniata</taxon>
        <taxon>Vertebrata</taxon>
        <taxon>Euteleostomi</taxon>
        <taxon>Mammalia</taxon>
        <taxon>Eutheria</taxon>
        <taxon>Laurasiatheria</taxon>
        <taxon>Eulipotyphla</taxon>
        <taxon>Erinaceidae</taxon>
        <taxon>Erinaceinae</taxon>
        <taxon>Erinaceus</taxon>
    </lineage>
</organism>
<feature type="chain" id="PRO_0000125857" description="Alpha-crystallin A chain">
    <location>
        <begin position="1"/>
        <end position="173"/>
    </location>
</feature>
<feature type="domain" description="sHSP" evidence="5">
    <location>
        <begin position="52"/>
        <end position="162"/>
    </location>
</feature>
<feature type="region of interest" description="Required for complex formation with BFSP1 and BFSP2" evidence="4">
    <location>
        <begin position="1"/>
        <end position="63"/>
    </location>
</feature>
<feature type="region of interest" description="Disordered" evidence="6">
    <location>
        <begin position="145"/>
        <end position="173"/>
    </location>
</feature>
<feature type="binding site" evidence="2">
    <location>
        <position position="100"/>
    </location>
    <ligand>
        <name>Zn(2+)</name>
        <dbReference type="ChEBI" id="CHEBI:29105"/>
        <label>1</label>
    </ligand>
</feature>
<feature type="binding site" evidence="2">
    <location>
        <position position="102"/>
    </location>
    <ligand>
        <name>Zn(2+)</name>
        <dbReference type="ChEBI" id="CHEBI:29105"/>
        <label>1</label>
    </ligand>
</feature>
<feature type="binding site" evidence="2">
    <location>
        <position position="107"/>
    </location>
    <ligand>
        <name>Zn(2+)</name>
        <dbReference type="ChEBI" id="CHEBI:29105"/>
        <label>2</label>
    </ligand>
</feature>
<feature type="modified residue" description="N-acetylmethionine" evidence="3 7">
    <location>
        <position position="1"/>
    </location>
</feature>
<feature type="modified residue" description="Deamidated glutamine; partial" evidence="1">
    <location>
        <position position="6"/>
    </location>
</feature>
<feature type="modified residue" description="Phosphoserine" evidence="4">
    <location>
        <position position="45"/>
    </location>
</feature>
<feature type="modified residue" description="Deamidated glutamine; partial" evidence="1">
    <location>
        <position position="50"/>
    </location>
</feature>
<feature type="modified residue" description="N6-acetyllysine" evidence="4">
    <location>
        <position position="70"/>
    </location>
</feature>
<feature type="modified residue" description="N6-acetyllysine" evidence="4">
    <location>
        <position position="99"/>
    </location>
</feature>
<feature type="glycosylation site" description="O-linked (GlcNAc) serine" evidence="1">
    <location>
        <position position="162"/>
    </location>
</feature>
<name>CRYAA_ERIEU</name>